<reference key="1">
    <citation type="journal article" date="2012" name="Plant Cell">
        <title>NODULE ROOT and COCHLEATA maintain nodule development and are legume orthologs of Arabidopsis BLADE-ON-PETIOLE genes.</title>
        <authorList>
            <person name="Couzigou J.-M."/>
            <person name="Zhukov V."/>
            <person name="Mondy S."/>
            <person name="Abu El Heba G."/>
            <person name="Cosson V."/>
            <person name="Ellis T.H.N."/>
            <person name="Ambrose M."/>
            <person name="Wen J."/>
            <person name="Tadege M."/>
            <person name="Tikhonovich I."/>
            <person name="Mysore K.S."/>
            <person name="Putterill J."/>
            <person name="Hofer J."/>
            <person name="Borisov A.Y."/>
            <person name="Ratet P."/>
        </authorList>
    </citation>
    <scope>NUCLEOTIDE SEQUENCE [GENOMIC DNA / MRNA]</scope>
    <scope>FUNCTION</scope>
    <scope>TISSUE SPECIFICITY</scope>
    <scope>INDUCTION</scope>
    <scope>DISRUPTION PHENOTYPE</scope>
    <source>
        <strain>cv. Jemalong A17</strain>
        <strain>cv. R108</strain>
    </source>
</reference>
<reference key="2">
    <citation type="journal article" date="2011" name="Nature">
        <title>The Medicago genome provides insight into the evolution of rhizobial symbioses.</title>
        <authorList>
            <person name="Young N.D."/>
            <person name="Debelle F."/>
            <person name="Oldroyd G.E.D."/>
            <person name="Geurts R."/>
            <person name="Cannon S.B."/>
            <person name="Udvardi M.K."/>
            <person name="Benedito V.A."/>
            <person name="Mayer K.F.X."/>
            <person name="Gouzy J."/>
            <person name="Schoof H."/>
            <person name="Van de Peer Y."/>
            <person name="Proost S."/>
            <person name="Cook D.R."/>
            <person name="Meyers B.C."/>
            <person name="Spannagl M."/>
            <person name="Cheung F."/>
            <person name="De Mita S."/>
            <person name="Krishnakumar V."/>
            <person name="Gundlach H."/>
            <person name="Zhou S."/>
            <person name="Mudge J."/>
            <person name="Bharti A.K."/>
            <person name="Murray J.D."/>
            <person name="Naoumkina M.A."/>
            <person name="Rosen B."/>
            <person name="Silverstein K.A.T."/>
            <person name="Tang H."/>
            <person name="Rombauts S."/>
            <person name="Zhao P.X."/>
            <person name="Zhou P."/>
            <person name="Barbe V."/>
            <person name="Bardou P."/>
            <person name="Bechner M."/>
            <person name="Bellec A."/>
            <person name="Berger A."/>
            <person name="Berges H."/>
            <person name="Bidwell S."/>
            <person name="Bisseling T."/>
            <person name="Choisne N."/>
            <person name="Couloux A."/>
            <person name="Denny R."/>
            <person name="Deshpande S."/>
            <person name="Dai X."/>
            <person name="Doyle J.J."/>
            <person name="Dudez A.-M."/>
            <person name="Farmer A.D."/>
            <person name="Fouteau S."/>
            <person name="Franken C."/>
            <person name="Gibelin C."/>
            <person name="Gish J."/>
            <person name="Goldstein S."/>
            <person name="Gonzalez A.J."/>
            <person name="Green P.J."/>
            <person name="Hallab A."/>
            <person name="Hartog M."/>
            <person name="Hua A."/>
            <person name="Humphray S.J."/>
            <person name="Jeong D.-H."/>
            <person name="Jing Y."/>
            <person name="Jocker A."/>
            <person name="Kenton S.M."/>
            <person name="Kim D.-J."/>
            <person name="Klee K."/>
            <person name="Lai H."/>
            <person name="Lang C."/>
            <person name="Lin S."/>
            <person name="Macmil S.L."/>
            <person name="Magdelenat G."/>
            <person name="Matthews L."/>
            <person name="McCorrison J."/>
            <person name="Monaghan E.L."/>
            <person name="Mun J.-H."/>
            <person name="Najar F.Z."/>
            <person name="Nicholson C."/>
            <person name="Noirot C."/>
            <person name="O'Bleness M."/>
            <person name="Paule C.R."/>
            <person name="Poulain J."/>
            <person name="Prion F."/>
            <person name="Qin B."/>
            <person name="Qu C."/>
            <person name="Retzel E.F."/>
            <person name="Riddle C."/>
            <person name="Sallet E."/>
            <person name="Samain S."/>
            <person name="Samson N."/>
            <person name="Sanders I."/>
            <person name="Saurat O."/>
            <person name="Scarpelli C."/>
            <person name="Schiex T."/>
            <person name="Segurens B."/>
            <person name="Severin A.J."/>
            <person name="Sherrier D.J."/>
            <person name="Shi R."/>
            <person name="Sims S."/>
            <person name="Singer S.R."/>
            <person name="Sinharoy S."/>
            <person name="Sterck L."/>
            <person name="Viollet A."/>
            <person name="Wang B.-B."/>
            <person name="Wang K."/>
            <person name="Wang M."/>
            <person name="Wang X."/>
            <person name="Warfsmann J."/>
            <person name="Weissenbach J."/>
            <person name="White D.D."/>
            <person name="White J.D."/>
            <person name="Wiley G.B."/>
            <person name="Wincker P."/>
            <person name="Xing Y."/>
            <person name="Yang L."/>
            <person name="Yao Z."/>
            <person name="Ying F."/>
            <person name="Zhai J."/>
            <person name="Zhou L."/>
            <person name="Zuber A."/>
            <person name="Denarie J."/>
            <person name="Dixon R.A."/>
            <person name="May G.D."/>
            <person name="Schwartz D.C."/>
            <person name="Rogers J."/>
            <person name="Quetier F."/>
            <person name="Town C.D."/>
            <person name="Roe B.A."/>
        </authorList>
    </citation>
    <scope>NUCLEOTIDE SEQUENCE [LARGE SCALE GENOMIC DNA]</scope>
    <source>
        <strain>cv. Jemalong A17</strain>
    </source>
</reference>
<reference key="3">
    <citation type="journal article" date="2014" name="BMC Genomics">
        <title>An improved genome release (version Mt4.0) for the model legume Medicago truncatula.</title>
        <authorList>
            <person name="Tang H."/>
            <person name="Krishnakumar V."/>
            <person name="Bidwell S."/>
            <person name="Rosen B."/>
            <person name="Chan A."/>
            <person name="Zhou S."/>
            <person name="Gentzbittel L."/>
            <person name="Childs K.L."/>
            <person name="Yandell M."/>
            <person name="Gundlach H."/>
            <person name="Mayer K.F."/>
            <person name="Schwartz D.C."/>
            <person name="Town C.D."/>
        </authorList>
    </citation>
    <scope>GENOME REANNOTATION</scope>
    <source>
        <strain>cv. Jemalong A17</strain>
    </source>
</reference>
<reference key="4">
    <citation type="journal article" date="2018" name="Nat. Plants">
        <title>Whole-genome landscape of Medicago truncatula symbiotic genes.</title>
        <authorList>
            <person name="Pecrix Y."/>
            <person name="Staton S.E."/>
            <person name="Sallet E."/>
            <person name="Lelandais-Briere C."/>
            <person name="Moreau S."/>
            <person name="Carrere S."/>
            <person name="Blein T."/>
            <person name="Jardinaud M.F."/>
            <person name="Latrasse D."/>
            <person name="Zouine M."/>
            <person name="Zahm M."/>
            <person name="Kreplak J."/>
            <person name="Mayjonade B."/>
            <person name="Satge C."/>
            <person name="Perez M."/>
            <person name="Cauet S."/>
            <person name="Marande W."/>
            <person name="Chantry-Darmon C."/>
            <person name="Lopez-Roques C."/>
            <person name="Bouchez O."/>
            <person name="Berard A."/>
            <person name="Debelle F."/>
            <person name="Munos S."/>
            <person name="Bendahmane A."/>
            <person name="Berges H."/>
            <person name="Niebel A."/>
            <person name="Buitink J."/>
            <person name="Frugier F."/>
            <person name="Benhamed M."/>
            <person name="Crespi M."/>
            <person name="Gouzy J."/>
            <person name="Gamas P."/>
        </authorList>
    </citation>
    <scope>NUCLEOTIDE SEQUENCE [LARGE SCALE GENOMIC DNA]</scope>
    <source>
        <strain>cv. Jemalong A17</strain>
    </source>
</reference>
<reference key="5">
    <citation type="journal article" date="2016" name="New Phytol.">
        <title>The legume NOOT-BOP-COCH-LIKE genes are conserved regulators of abscission, a major agronomical trait in cultivated crops.</title>
        <authorList>
            <person name="Couzigou J.-M."/>
            <person name="Magne K."/>
            <person name="Mondy S."/>
            <person name="Cosson V."/>
            <person name="Clements J."/>
            <person name="Ratet P."/>
        </authorList>
    </citation>
    <scope>FUNCTION</scope>
    <scope>DISRUPTION PHENOTYPE</scope>
    <scope>TISSUE SPECIFICITY</scope>
    <scope>DEVELOPMENTAL STAGE</scope>
</reference>
<reference key="6">
    <citation type="journal article" date="2018" name="Plant Physiol.">
        <title>MtNODULE ROOT1 and MtNODULE ROOT2 are essential for indeterminate nodule identity.</title>
        <authorList>
            <person name="Magne K."/>
            <person name="Couzigou J.M."/>
            <person name="Schiessl K."/>
            <person name="Liu S."/>
            <person name="George J."/>
            <person name="Zhukov V."/>
            <person name="Sahl L."/>
            <person name="Boyer F."/>
            <person name="Iantcheva A."/>
            <person name="Mysore K.S."/>
            <person name="Wen J."/>
            <person name="Citerne S."/>
            <person name="Oldroyd G.E.D."/>
            <person name="Ratet P."/>
        </authorList>
    </citation>
    <scope>FUNCTION</scope>
    <scope>INDUCTION</scope>
    <scope>DISRUPTION PHENOTYPE</scope>
</reference>
<protein>
    <recommendedName>
        <fullName evidence="13">BTB/POZ domain and ankyrin repeat-containing protein NOOT1</fullName>
    </recommendedName>
    <alternativeName>
        <fullName evidence="12">Protein NODULE ROOT 1</fullName>
        <shortName evidence="12">MtNOOT1</shortName>
    </alternativeName>
</protein>
<gene>
    <name evidence="12" type="primary">NOOT1</name>
    <name evidence="11" type="synonym">NOOT</name>
    <name evidence="15" type="ordered locus">MTR_7g090020</name>
    <name evidence="14" type="ORF">MtrDRAFT_AC147961g14v2</name>
</gene>
<feature type="chain" id="PRO_0000445727" description="BTB/POZ domain and ankyrin repeat-containing protein NOOT1">
    <location>
        <begin position="1"/>
        <end position="482"/>
    </location>
</feature>
<feature type="domain" description="BTB" evidence="5">
    <location>
        <begin position="25"/>
        <end position="107"/>
    </location>
</feature>
<feature type="repeat" description="ANK 1" evidence="4">
    <location>
        <begin position="249"/>
        <end position="278"/>
    </location>
</feature>
<feature type="repeat" description="ANK 2" evidence="4">
    <location>
        <begin position="279"/>
        <end position="308"/>
    </location>
</feature>
<feature type="repeat" description="ANK 3" evidence="4">
    <location>
        <begin position="313"/>
        <end position="342"/>
    </location>
</feature>
<feature type="repeat" description="ANK 4" evidence="13">
    <location>
        <begin position="346"/>
        <end position="380"/>
    </location>
</feature>
<feature type="zinc finger region" description="C2HC NPR-type" evidence="6">
    <location>
        <begin position="113"/>
        <end position="127"/>
    </location>
</feature>
<feature type="region of interest" description="Disordered" evidence="7">
    <location>
        <begin position="395"/>
        <end position="434"/>
    </location>
</feature>
<feature type="compositionally biased region" description="Low complexity" evidence="7">
    <location>
        <begin position="398"/>
        <end position="415"/>
    </location>
</feature>
<feature type="binding site" evidence="6">
    <location>
        <position position="116"/>
    </location>
    <ligand>
        <name>Zn(2+)</name>
        <dbReference type="ChEBI" id="CHEBI:29105"/>
    </ligand>
</feature>
<feature type="binding site" evidence="6">
    <location>
        <position position="121"/>
    </location>
    <ligand>
        <name>Zn(2+)</name>
        <dbReference type="ChEBI" id="CHEBI:29105"/>
    </ligand>
</feature>
<feature type="binding site" evidence="6">
    <location>
        <position position="123"/>
    </location>
    <ligand>
        <name>Zn(2+)</name>
        <dbReference type="ChEBI" id="CHEBI:29105"/>
    </ligand>
</feature>
<feature type="binding site" evidence="6">
    <location>
        <position position="126"/>
    </location>
    <ligand>
        <name>Zn(2+)</name>
        <dbReference type="ChEBI" id="CHEBI:29105"/>
    </ligand>
</feature>
<feature type="sequence conflict" description="In Ref. 1; AET34786/AET34788." evidence="13" ref="1">
    <original>S</original>
    <variation>SN</variation>
    <location>
        <position position="402"/>
    </location>
</feature>
<feature type="sequence conflict" description="In Ref. 1; AET34786/AET34788." evidence="13" ref="1">
    <original>H</original>
    <variation>R</variation>
    <location>
        <position position="427"/>
    </location>
</feature>
<proteinExistence type="evidence at transcript level"/>
<sequence>MSLEDSLRSLSLDYLNLLINGQAFSDVVFSVEGRLVHAHRCILAARSLFFRKFFCGPDPPSGLDPSGNRVNPSGSARSGVIPVNSVGYEVFLLMLQFLYSGQVSIVPQKHEPRPNCGDRGCWHTHCTSAVDLALDTLAAARYFGVEQLALLTQKQLASMVEKASIEDVMKVLLASRKQDMHQLWTTCSHLVAKSGLPPEVLAKHLPIDIIAKIEELRIKTSLSRRSLMPHHHHPHHHDHLTAAADLEDQKIRRMRRALDSSDVELVKLMVMGEGLNLDEALALPYAVENCSREVVKALLELGAADVNFPAGPTGKTPLHIAAEMVSPDMVAVLLDHHADPNVRTVDGVTPLDILRTLTSDFLFKGAVPGLTHIEPNKLRLCLELVQSAALVMSREEGNNNNSNNNNNATASSATNMYPHHNMNEDHHHSHNNNNMDSRLVYLNLGANTQMSTSRMDSGDDDNTHREAINNSMYHHHSHGHDY</sequence>
<evidence type="ECO:0000250" key="1">
    <source>
        <dbReference type="UniProtKB" id="G3LSH3"/>
    </source>
</evidence>
<evidence type="ECO:0000250" key="2">
    <source>
        <dbReference type="UniProtKB" id="O22286"/>
    </source>
</evidence>
<evidence type="ECO:0000250" key="3">
    <source>
        <dbReference type="UniProtKB" id="Q9ZVC2"/>
    </source>
</evidence>
<evidence type="ECO:0000255" key="4"/>
<evidence type="ECO:0000255" key="5">
    <source>
        <dbReference type="PROSITE-ProRule" id="PRU00037"/>
    </source>
</evidence>
<evidence type="ECO:0000255" key="6">
    <source>
        <dbReference type="PROSITE-ProRule" id="PRU01391"/>
    </source>
</evidence>
<evidence type="ECO:0000256" key="7">
    <source>
        <dbReference type="SAM" id="MobiDB-lite"/>
    </source>
</evidence>
<evidence type="ECO:0000269" key="8">
    <source>
    </source>
</evidence>
<evidence type="ECO:0000269" key="9">
    <source>
    </source>
</evidence>
<evidence type="ECO:0000269" key="10">
    <source>
    </source>
</evidence>
<evidence type="ECO:0000303" key="11">
    <source>
    </source>
</evidence>
<evidence type="ECO:0000303" key="12">
    <source>
    </source>
</evidence>
<evidence type="ECO:0000305" key="13"/>
<evidence type="ECO:0000312" key="14">
    <source>
        <dbReference type="EMBL" id="ABD28327.1"/>
    </source>
</evidence>
<evidence type="ECO:0000312" key="15">
    <source>
        <dbReference type="EMBL" id="AES81230.1"/>
    </source>
</evidence>
<dbReference type="EMBL" id="JN180856">
    <property type="protein sequence ID" value="AET34786.1"/>
    <property type="molecule type" value="Genomic_DNA"/>
</dbReference>
<dbReference type="EMBL" id="JN180857">
    <property type="protein sequence ID" value="AET34787.1"/>
    <property type="molecule type" value="Genomic_DNA"/>
</dbReference>
<dbReference type="EMBL" id="JN180858">
    <property type="protein sequence ID" value="AET34788.1"/>
    <property type="molecule type" value="mRNA"/>
</dbReference>
<dbReference type="EMBL" id="JN180859">
    <property type="protein sequence ID" value="AET34789.1"/>
    <property type="molecule type" value="mRNA"/>
</dbReference>
<dbReference type="EMBL" id="AC147961">
    <property type="protein sequence ID" value="ABD28327.1"/>
    <property type="molecule type" value="Genomic_DNA"/>
</dbReference>
<dbReference type="EMBL" id="CM001223">
    <property type="protein sequence ID" value="AES81230.1"/>
    <property type="molecule type" value="Genomic_DNA"/>
</dbReference>
<dbReference type="EMBL" id="PSQE01000007">
    <property type="protein sequence ID" value="RHN47744.1"/>
    <property type="molecule type" value="Genomic_DNA"/>
</dbReference>
<dbReference type="RefSeq" id="XP_003625012.1">
    <property type="nucleotide sequence ID" value="XM_003624964.2"/>
</dbReference>
<dbReference type="SMR" id="Q2HW56"/>
<dbReference type="STRING" id="3880.Q2HW56"/>
<dbReference type="PaxDb" id="3880-AES81230"/>
<dbReference type="EnsemblPlants" id="rna42379">
    <property type="protein sequence ID" value="RHN47744.1"/>
    <property type="gene ID" value="gene42379"/>
</dbReference>
<dbReference type="GeneID" id="11417633"/>
<dbReference type="Gramene" id="rna42379">
    <property type="protein sequence ID" value="RHN47744.1"/>
    <property type="gene ID" value="gene42379"/>
</dbReference>
<dbReference type="KEGG" id="mtr:11417633"/>
<dbReference type="eggNOG" id="KOG0504">
    <property type="taxonomic scope" value="Eukaryota"/>
</dbReference>
<dbReference type="HOGENOM" id="CLU_028148_0_0_1"/>
<dbReference type="OMA" id="PNVRTMD"/>
<dbReference type="OrthoDB" id="45365at2759"/>
<dbReference type="UniPathway" id="UPA00143"/>
<dbReference type="Proteomes" id="UP000002051">
    <property type="component" value="Chomosome 7"/>
</dbReference>
<dbReference type="Proteomes" id="UP000265566">
    <property type="component" value="Chromosome 7"/>
</dbReference>
<dbReference type="ExpressionAtlas" id="Q2HW56">
    <property type="expression patterns" value="differential"/>
</dbReference>
<dbReference type="GO" id="GO:0005737">
    <property type="term" value="C:cytoplasm"/>
    <property type="evidence" value="ECO:0007669"/>
    <property type="project" value="UniProtKB-SubCell"/>
</dbReference>
<dbReference type="GO" id="GO:0005634">
    <property type="term" value="C:nucleus"/>
    <property type="evidence" value="ECO:0000318"/>
    <property type="project" value="GO_Central"/>
</dbReference>
<dbReference type="GO" id="GO:0005886">
    <property type="term" value="C:plasma membrane"/>
    <property type="evidence" value="ECO:0007669"/>
    <property type="project" value="UniProtKB-SubCell"/>
</dbReference>
<dbReference type="GO" id="GO:0000976">
    <property type="term" value="F:transcription cis-regulatory region binding"/>
    <property type="evidence" value="ECO:0000318"/>
    <property type="project" value="GO_Central"/>
</dbReference>
<dbReference type="GO" id="GO:0008270">
    <property type="term" value="F:zinc ion binding"/>
    <property type="evidence" value="ECO:0007669"/>
    <property type="project" value="UniProtKB-KW"/>
</dbReference>
<dbReference type="GO" id="GO:0009864">
    <property type="term" value="P:induced systemic resistance, jasmonic acid mediated signaling pathway"/>
    <property type="evidence" value="ECO:0000318"/>
    <property type="project" value="GO_Central"/>
</dbReference>
<dbReference type="GO" id="GO:0009877">
    <property type="term" value="P:nodulation"/>
    <property type="evidence" value="ECO:0000315"/>
    <property type="project" value="UniProtKB"/>
</dbReference>
<dbReference type="GO" id="GO:0006355">
    <property type="term" value="P:regulation of DNA-templated transcription"/>
    <property type="evidence" value="ECO:0000318"/>
    <property type="project" value="GO_Central"/>
</dbReference>
<dbReference type="GO" id="GO:0010865">
    <property type="term" value="P:stipule development"/>
    <property type="evidence" value="ECO:0000315"/>
    <property type="project" value="UniProtKB"/>
</dbReference>
<dbReference type="CDD" id="cd18310">
    <property type="entry name" value="BTB_POZ_NPR_plant"/>
    <property type="match status" value="1"/>
</dbReference>
<dbReference type="FunFam" id="3.30.710.10:FF:000084">
    <property type="entry name" value="regulatory protein NPR5 isoform X1"/>
    <property type="match status" value="1"/>
</dbReference>
<dbReference type="FunFam" id="1.25.40.20:FF:000058">
    <property type="entry name" value="regulatory protein NPR5 isoform X2"/>
    <property type="match status" value="1"/>
</dbReference>
<dbReference type="Gene3D" id="1.25.40.20">
    <property type="entry name" value="Ankyrin repeat-containing domain"/>
    <property type="match status" value="1"/>
</dbReference>
<dbReference type="Gene3D" id="3.30.710.10">
    <property type="entry name" value="Potassium Channel Kv1.1, Chain A"/>
    <property type="match status" value="1"/>
</dbReference>
<dbReference type="InterPro" id="IPR002110">
    <property type="entry name" value="Ankyrin_rpt"/>
</dbReference>
<dbReference type="InterPro" id="IPR036770">
    <property type="entry name" value="Ankyrin_rpt-contain_sf"/>
</dbReference>
<dbReference type="InterPro" id="IPR000210">
    <property type="entry name" value="BTB/POZ_dom"/>
</dbReference>
<dbReference type="InterPro" id="IPR044284">
    <property type="entry name" value="NPR5/6"/>
</dbReference>
<dbReference type="InterPro" id="IPR024228">
    <property type="entry name" value="NPR_central_dom"/>
</dbReference>
<dbReference type="InterPro" id="IPR011333">
    <property type="entry name" value="SKP1/BTB/POZ_sf"/>
</dbReference>
<dbReference type="PANTHER" id="PTHR46668">
    <property type="entry name" value="BTB/POZ DOMAIN AND ANKYRIN REPEAT-CONTAINING PROTEIN NH5.2"/>
    <property type="match status" value="1"/>
</dbReference>
<dbReference type="PANTHER" id="PTHR46668:SF1">
    <property type="entry name" value="REGULATORY PROTEIN NPR5"/>
    <property type="match status" value="1"/>
</dbReference>
<dbReference type="Pfam" id="PF12796">
    <property type="entry name" value="Ank_2"/>
    <property type="match status" value="1"/>
</dbReference>
<dbReference type="Pfam" id="PF00651">
    <property type="entry name" value="BTB"/>
    <property type="match status" value="1"/>
</dbReference>
<dbReference type="Pfam" id="PF11900">
    <property type="entry name" value="DUF3420"/>
    <property type="match status" value="1"/>
</dbReference>
<dbReference type="SMART" id="SM00248">
    <property type="entry name" value="ANK"/>
    <property type="match status" value="2"/>
</dbReference>
<dbReference type="SMART" id="SM00225">
    <property type="entry name" value="BTB"/>
    <property type="match status" value="1"/>
</dbReference>
<dbReference type="SUPFAM" id="SSF48403">
    <property type="entry name" value="Ankyrin repeat"/>
    <property type="match status" value="1"/>
</dbReference>
<dbReference type="SUPFAM" id="SSF54695">
    <property type="entry name" value="POZ domain"/>
    <property type="match status" value="1"/>
</dbReference>
<dbReference type="PROSITE" id="PS50297">
    <property type="entry name" value="ANK_REP_REGION"/>
    <property type="match status" value="1"/>
</dbReference>
<dbReference type="PROSITE" id="PS50088">
    <property type="entry name" value="ANK_REPEAT"/>
    <property type="match status" value="1"/>
</dbReference>
<dbReference type="PROSITE" id="PS50097">
    <property type="entry name" value="BTB"/>
    <property type="match status" value="1"/>
</dbReference>
<dbReference type="PROSITE" id="PS52046">
    <property type="entry name" value="ZF_C2HC_NPR"/>
    <property type="match status" value="1"/>
</dbReference>
<comment type="function">
    <text evidence="1 2 8 9 10">May act as a substrate-specific adapter of an E3 ubiquitin-protein ligase complex (CUL3-RBX1-BTB) which mediates the ubiquitination and subsequent proteasomal degradation of target proteins (By similarity). Transcriptional co-regulator involved in the promotion of leaf and floral meristem fate and determinacy (PubMed:23136374). Promotes normal stipule growth and development (PubMed:23136374). Required for the abscission of senescent organs, probably by regulating the cell wall disorganization in abscission zones (AZs, e.g. pulvini at the base of leaves) (PubMed:26390061). Involved in the coordination of the symbiotic nodule developmental program (PubMed:23136374). Promotes the formation of root nodules by interacting directly with APP1 to modulate the expression of the nuclear transcription factor Y subunit (NF-YA1), a key nodulin (By similarity). Necessary for the robust maintenance of nodule identity throughout the nodule developmental program (PubMed:23136374). Involved in the regulation of indeterminate nodule identity in association with NOOT2 (PubMed:30026291).</text>
</comment>
<comment type="pathway">
    <text evidence="2">Protein modification; protein ubiquitination.</text>
</comment>
<comment type="subunit">
    <text evidence="3">Homodimer.</text>
</comment>
<comment type="subcellular location">
    <subcellularLocation>
        <location evidence="1">Nucleus</location>
    </subcellularLocation>
    <subcellularLocation>
        <location evidence="1">Cytoplasm</location>
    </subcellularLocation>
    <subcellularLocation>
        <location evidence="1">Cell membrane</location>
        <topology evidence="1">Peripheral membrane protein</topology>
        <orientation evidence="1">Cytoplasmic side</orientation>
    </subcellularLocation>
</comment>
<comment type="tissue specificity">
    <text evidence="8 9">Expressed in the shoot apical meristem (SAM) at the base of the developing leaf where stipules are formed (PubMed:23136374, PubMed:26390061). Associated with functional and vestigial abscission zones (AZs), including pulvini (PubMed:26390061).</text>
</comment>
<comment type="developmental stage">
    <text evidence="9">In pulvini, observed in the first unifoliolate leaf as well as in trifoliolate leaves (PubMed:26390061). First observed in unfolded leaves, and accumulates progressively to reach maximum levels in mature green leaves (PubMed:26390061). In developing pods, initially localized at the junction between the pedicel and the immature pod, and later extended to a larger region corresponding to the fruit abscission site (PubMed:26390061).</text>
</comment>
<comment type="induction">
    <text evidence="8 10">Induced in roots during nodulation.</text>
</comment>
<comment type="domain">
    <text evidence="2">The BTB/POZ domain mediates the interaction with some component of ubiquitin ligase complexes.</text>
</comment>
<comment type="disruption phenotype">
    <text evidence="8 9 10">Altered morphology of stipules and flowers (PubMed:23136374). Altered abscission of senescing leaves, leaflets and pods, and of petals in developing fruits, even after complete pod senescence; this phenotype is associated with a reduction of cell organization and/or differentiation in pulvini, organs present in abscission zones (AZs) (PubMed:26390061). Partial loss of nodule identity characterized by the development of ectopic roots arising from nodule vascular meristems (PubMed:23136374). The double mutants noot1 and noot2 exhibit complete loss of nodule identity and develop only non-fixing root-like structures that are no longer able to host symbiotic rhizobia (PubMed:30026291).</text>
</comment>
<comment type="similarity">
    <text evidence="13">Belongs to the plant 'ANKYRIN-BTB/POZ' family. 'NOOT-BOP-COCH-like' (NBCL) subfamily.</text>
</comment>
<organism>
    <name type="scientific">Medicago truncatula</name>
    <name type="common">Barrel medic</name>
    <name type="synonym">Medicago tribuloides</name>
    <dbReference type="NCBI Taxonomy" id="3880"/>
    <lineage>
        <taxon>Eukaryota</taxon>
        <taxon>Viridiplantae</taxon>
        <taxon>Streptophyta</taxon>
        <taxon>Embryophyta</taxon>
        <taxon>Tracheophyta</taxon>
        <taxon>Spermatophyta</taxon>
        <taxon>Magnoliopsida</taxon>
        <taxon>eudicotyledons</taxon>
        <taxon>Gunneridae</taxon>
        <taxon>Pentapetalae</taxon>
        <taxon>rosids</taxon>
        <taxon>fabids</taxon>
        <taxon>Fabales</taxon>
        <taxon>Fabaceae</taxon>
        <taxon>Papilionoideae</taxon>
        <taxon>50 kb inversion clade</taxon>
        <taxon>NPAAA clade</taxon>
        <taxon>Hologalegina</taxon>
        <taxon>IRL clade</taxon>
        <taxon>Trifolieae</taxon>
        <taxon>Medicago</taxon>
    </lineage>
</organism>
<accession>Q2HW56</accession>
<accession>G8GTN4</accession>
<name>NOOT1_MEDTR</name>
<keyword id="KW-0040">ANK repeat</keyword>
<keyword id="KW-1003">Cell membrane</keyword>
<keyword id="KW-0963">Cytoplasm</keyword>
<keyword id="KW-0472">Membrane</keyword>
<keyword id="KW-0479">Metal-binding</keyword>
<keyword id="KW-0536">Nodulation</keyword>
<keyword id="KW-0539">Nucleus</keyword>
<keyword id="KW-1185">Reference proteome</keyword>
<keyword id="KW-0677">Repeat</keyword>
<keyword id="KW-0833">Ubl conjugation pathway</keyword>
<keyword id="KW-0862">Zinc</keyword>
<keyword id="KW-0863">Zinc-finger</keyword>